<sequence>MNNKIALYCRSGFEKECAAEITEKAAQLEIFGFARVKENSGYVLFECYQLEDADRLIREIPFREFIFARQMMVVGELLKDLPPEDRVSPIVGMLVGVIEKAGELRVEVADTNESKELLKFCRKLTVPLRSALREQKILSARENAHRPVVHVFFIAPGCCYVGYSYSNNNSPFYMGIPRLKFPSDAPSRSTLKLEEAFHVFIPADEWEERLASGMHAVDLGACPGGWTYQLVQRSMMIQAVDNGLMAQSLMDTGQVTHHRADGFKYEPTRSNIYWLVCDMVEKPTKVTQLITKWLVNGWCREAIFNLKLPMKKRYEEVVQNLAMMDEQLKENGINADIHAKQLYHDREEVTVHVRRIWSGAPGRRDERY</sequence>
<feature type="chain" id="PRO_1000201541" description="Ribosomal RNA large subunit methyltransferase M">
    <location>
        <begin position="1"/>
        <end position="368"/>
    </location>
</feature>
<feature type="active site" description="Proton acceptor" evidence="1">
    <location>
        <position position="307"/>
    </location>
</feature>
<feature type="binding site" evidence="1">
    <location>
        <position position="189"/>
    </location>
    <ligand>
        <name>S-adenosyl-L-methionine</name>
        <dbReference type="ChEBI" id="CHEBI:59789"/>
    </ligand>
</feature>
<feature type="binding site" evidence="1">
    <location>
        <begin position="222"/>
        <end position="225"/>
    </location>
    <ligand>
        <name>S-adenosyl-L-methionine</name>
        <dbReference type="ChEBI" id="CHEBI:59789"/>
    </ligand>
</feature>
<feature type="binding site" evidence="1">
    <location>
        <position position="241"/>
    </location>
    <ligand>
        <name>S-adenosyl-L-methionine</name>
        <dbReference type="ChEBI" id="CHEBI:59789"/>
    </ligand>
</feature>
<feature type="binding site" evidence="1">
    <location>
        <position position="261"/>
    </location>
    <ligand>
        <name>S-adenosyl-L-methionine</name>
        <dbReference type="ChEBI" id="CHEBI:59789"/>
    </ligand>
</feature>
<feature type="binding site" evidence="1">
    <location>
        <position position="278"/>
    </location>
    <ligand>
        <name>S-adenosyl-L-methionine</name>
        <dbReference type="ChEBI" id="CHEBI:59789"/>
    </ligand>
</feature>
<organism>
    <name type="scientific">Yersinia pseudotuberculosis serotype O:3 (strain YPIII)</name>
    <dbReference type="NCBI Taxonomy" id="502800"/>
    <lineage>
        <taxon>Bacteria</taxon>
        <taxon>Pseudomonadati</taxon>
        <taxon>Pseudomonadota</taxon>
        <taxon>Gammaproteobacteria</taxon>
        <taxon>Enterobacterales</taxon>
        <taxon>Yersiniaceae</taxon>
        <taxon>Yersinia</taxon>
    </lineage>
</organism>
<evidence type="ECO:0000255" key="1">
    <source>
        <dbReference type="HAMAP-Rule" id="MF_01551"/>
    </source>
</evidence>
<protein>
    <recommendedName>
        <fullName evidence="1">Ribosomal RNA large subunit methyltransferase M</fullName>
        <ecNumber evidence="1">2.1.1.186</ecNumber>
    </recommendedName>
    <alternativeName>
        <fullName evidence="1">23S rRNA (cytidine2498-2'-O)-methyltransferase</fullName>
    </alternativeName>
    <alternativeName>
        <fullName evidence="1">23S rRNA 2'-O-ribose methyltransferase RlmM</fullName>
    </alternativeName>
</protein>
<proteinExistence type="inferred from homology"/>
<keyword id="KW-0963">Cytoplasm</keyword>
<keyword id="KW-0489">Methyltransferase</keyword>
<keyword id="KW-0698">rRNA processing</keyword>
<keyword id="KW-0949">S-adenosyl-L-methionine</keyword>
<keyword id="KW-0808">Transferase</keyword>
<reference key="1">
    <citation type="submission" date="2008-02" db="EMBL/GenBank/DDBJ databases">
        <title>Complete sequence of Yersinia pseudotuberculosis YPIII.</title>
        <authorList>
            <consortium name="US DOE Joint Genome Institute"/>
            <person name="Copeland A."/>
            <person name="Lucas S."/>
            <person name="Lapidus A."/>
            <person name="Glavina del Rio T."/>
            <person name="Dalin E."/>
            <person name="Tice H."/>
            <person name="Bruce D."/>
            <person name="Goodwin L."/>
            <person name="Pitluck S."/>
            <person name="Munk A.C."/>
            <person name="Brettin T."/>
            <person name="Detter J.C."/>
            <person name="Han C."/>
            <person name="Tapia R."/>
            <person name="Schmutz J."/>
            <person name="Larimer F."/>
            <person name="Land M."/>
            <person name="Hauser L."/>
            <person name="Challacombe J.F."/>
            <person name="Green L."/>
            <person name="Lindler L.E."/>
            <person name="Nikolich M.P."/>
            <person name="Richardson P."/>
        </authorList>
    </citation>
    <scope>NUCLEOTIDE SEQUENCE [LARGE SCALE GENOMIC DNA]</scope>
    <source>
        <strain>YPIII</strain>
    </source>
</reference>
<dbReference type="EC" id="2.1.1.186" evidence="1"/>
<dbReference type="EMBL" id="CP000950">
    <property type="protein sequence ID" value="ACA67355.1"/>
    <property type="molecule type" value="Genomic_DNA"/>
</dbReference>
<dbReference type="RefSeq" id="WP_002212119.1">
    <property type="nucleotide sequence ID" value="NZ_CP009792.1"/>
</dbReference>
<dbReference type="SMR" id="B1JQE8"/>
<dbReference type="GeneID" id="57977530"/>
<dbReference type="KEGG" id="ypy:YPK_1054"/>
<dbReference type="PATRIC" id="fig|502800.11.peg.1686"/>
<dbReference type="GO" id="GO:0005737">
    <property type="term" value="C:cytoplasm"/>
    <property type="evidence" value="ECO:0007669"/>
    <property type="project" value="UniProtKB-SubCell"/>
</dbReference>
<dbReference type="GO" id="GO:0008757">
    <property type="term" value="F:S-adenosylmethionine-dependent methyltransferase activity"/>
    <property type="evidence" value="ECO:0007669"/>
    <property type="project" value="UniProtKB-UniRule"/>
</dbReference>
<dbReference type="GO" id="GO:0032259">
    <property type="term" value="P:methylation"/>
    <property type="evidence" value="ECO:0007669"/>
    <property type="project" value="UniProtKB-KW"/>
</dbReference>
<dbReference type="GO" id="GO:0006364">
    <property type="term" value="P:rRNA processing"/>
    <property type="evidence" value="ECO:0007669"/>
    <property type="project" value="UniProtKB-UniRule"/>
</dbReference>
<dbReference type="Gene3D" id="3.30.2300.20">
    <property type="match status" value="1"/>
</dbReference>
<dbReference type="Gene3D" id="3.30.70.2810">
    <property type="match status" value="1"/>
</dbReference>
<dbReference type="Gene3D" id="3.40.50.150">
    <property type="entry name" value="Vaccinia Virus protein VP39"/>
    <property type="match status" value="1"/>
</dbReference>
<dbReference type="HAMAP" id="MF_01551">
    <property type="entry name" value="23SrRNA_methyltr_M"/>
    <property type="match status" value="1"/>
</dbReference>
<dbReference type="InterPro" id="IPR040739">
    <property type="entry name" value="RlmM_FDX"/>
</dbReference>
<dbReference type="InterPro" id="IPR048646">
    <property type="entry name" value="RlmM_THUMP-like"/>
</dbReference>
<dbReference type="InterPro" id="IPR002877">
    <property type="entry name" value="RNA_MeTrfase_FtsJ_dom"/>
</dbReference>
<dbReference type="InterPro" id="IPR011224">
    <property type="entry name" value="rRNA_MeTrfase_M"/>
</dbReference>
<dbReference type="InterPro" id="IPR029063">
    <property type="entry name" value="SAM-dependent_MTases_sf"/>
</dbReference>
<dbReference type="NCBIfam" id="NF008734">
    <property type="entry name" value="PRK11760.1"/>
    <property type="match status" value="1"/>
</dbReference>
<dbReference type="PANTHER" id="PTHR37524">
    <property type="entry name" value="RIBOSOMAL RNA LARGE SUBUNIT METHYLTRANSFERASE M"/>
    <property type="match status" value="1"/>
</dbReference>
<dbReference type="PANTHER" id="PTHR37524:SF2">
    <property type="entry name" value="RIBOSOMAL RNA METHYLTRANSFERASE FTSJ DOMAIN-CONTAINING PROTEIN"/>
    <property type="match status" value="1"/>
</dbReference>
<dbReference type="Pfam" id="PF01728">
    <property type="entry name" value="FtsJ"/>
    <property type="match status" value="1"/>
</dbReference>
<dbReference type="Pfam" id="PF18125">
    <property type="entry name" value="RlmM_FDX"/>
    <property type="match status" value="1"/>
</dbReference>
<dbReference type="Pfam" id="PF21239">
    <property type="entry name" value="RLMM_N"/>
    <property type="match status" value="1"/>
</dbReference>
<dbReference type="PIRSF" id="PIRSF028774">
    <property type="entry name" value="UCP028774"/>
    <property type="match status" value="1"/>
</dbReference>
<dbReference type="SUPFAM" id="SSF53335">
    <property type="entry name" value="S-adenosyl-L-methionine-dependent methyltransferases"/>
    <property type="match status" value="1"/>
</dbReference>
<comment type="function">
    <text evidence="1">Catalyzes the 2'-O-methylation at nucleotide C2498 in 23S rRNA.</text>
</comment>
<comment type="catalytic activity">
    <reaction evidence="1">
        <text>cytidine(2498) in 23S rRNA + S-adenosyl-L-methionine = 2'-O-methylcytidine(2498) in 23S rRNA + S-adenosyl-L-homocysteine + H(+)</text>
        <dbReference type="Rhea" id="RHEA:42788"/>
        <dbReference type="Rhea" id="RHEA-COMP:10244"/>
        <dbReference type="Rhea" id="RHEA-COMP:10245"/>
        <dbReference type="ChEBI" id="CHEBI:15378"/>
        <dbReference type="ChEBI" id="CHEBI:57856"/>
        <dbReference type="ChEBI" id="CHEBI:59789"/>
        <dbReference type="ChEBI" id="CHEBI:74495"/>
        <dbReference type="ChEBI" id="CHEBI:82748"/>
        <dbReference type="EC" id="2.1.1.186"/>
    </reaction>
</comment>
<comment type="subunit">
    <text evidence="1">Monomer.</text>
</comment>
<comment type="subcellular location">
    <subcellularLocation>
        <location evidence="1">Cytoplasm</location>
    </subcellularLocation>
</comment>
<comment type="similarity">
    <text evidence="1">Belongs to the class I-like SAM-binding methyltransferase superfamily. RNA methyltransferase RlmE family. RlmM subfamily.</text>
</comment>
<accession>B1JQE8</accession>
<name>RLMM_YERPY</name>
<gene>
    <name evidence="1" type="primary">rlmM</name>
    <name type="ordered locus">YPK_1054</name>
</gene>